<comment type="function">
    <text evidence="5 12 15">Thiol-specific peroxidase that catalyzes the reduction of hydrogen peroxide and organic hydroperoxides to water and alcohols, respectively (PubMed:10893423, PubMed:9497358). Can reduce H(2)O(2) and short chain organic, fatty acid, and phospholipid hydroperoxides (PubMed:10893423). Also has phospholipase activity, can therefore either reduce the oxidized sn-2 fatty acyl group of phospholipids (peroxidase activity) or hydrolyze the sn-2 ester bond of phospholipids (phospholipase activity) (PubMed:10893423, PubMed:26830860). These activities are dependent on binding to phospholipids at acidic pH and to oxidized phospholipds at cytosolic pH (PubMed:10893423). Plays a role in cell protection against oxidative stress by detoxifying peroxides and in phospholipid homeostasis (PubMed:10893423). Exhibits acyl-CoA-dependent lysophospholipid acyltransferase which mediates the conversion of lysophosphatidylcholine (1-acyl-sn-glycero-3-phosphocholine or LPC) into phosphatidylcholine (1,2-diacyl-sn-glycero-3-phosphocholine or PC) (PubMed:26830860). Shows a clear preference for LPC as the lysophospholipid and for palmitoyl CoA as the fatty acyl substrate (PubMed:26830860).</text>
</comment>
<comment type="catalytic activity">
    <reaction evidence="5 15">
        <text>a hydroperoxide + 2 glutathione = an alcohol + glutathione disulfide + H2O</text>
        <dbReference type="Rhea" id="RHEA:62632"/>
        <dbReference type="ChEBI" id="CHEBI:15377"/>
        <dbReference type="ChEBI" id="CHEBI:30879"/>
        <dbReference type="ChEBI" id="CHEBI:35924"/>
        <dbReference type="ChEBI" id="CHEBI:57925"/>
        <dbReference type="ChEBI" id="CHEBI:58297"/>
        <dbReference type="EC" id="1.11.1.27"/>
    </reaction>
</comment>
<comment type="catalytic activity">
    <reaction evidence="5 12">
        <text>a 1,2-diacyl-sn-glycero-3-phosphocholine + H2O = a 1-acyl-sn-glycero-3-phosphocholine + a fatty acid + H(+)</text>
        <dbReference type="Rhea" id="RHEA:15801"/>
        <dbReference type="ChEBI" id="CHEBI:15377"/>
        <dbReference type="ChEBI" id="CHEBI:15378"/>
        <dbReference type="ChEBI" id="CHEBI:28868"/>
        <dbReference type="ChEBI" id="CHEBI:57643"/>
        <dbReference type="ChEBI" id="CHEBI:58168"/>
        <dbReference type="EC" id="3.1.1.4"/>
    </reaction>
</comment>
<comment type="catalytic activity">
    <reaction evidence="12">
        <text>a 1-acyl-sn-glycero-3-phosphocholine + an acyl-CoA = a 1,2-diacyl-sn-glycero-3-phosphocholine + CoA</text>
        <dbReference type="Rhea" id="RHEA:12937"/>
        <dbReference type="ChEBI" id="CHEBI:57287"/>
        <dbReference type="ChEBI" id="CHEBI:57643"/>
        <dbReference type="ChEBI" id="CHEBI:58168"/>
        <dbReference type="ChEBI" id="CHEBI:58342"/>
        <dbReference type="EC" id="2.3.1.23"/>
    </reaction>
</comment>
<comment type="catalytic activity">
    <reaction evidence="12">
        <text>1-hexadecanoyl-sn-glycero-3-phosphocholine + hexadecanoyl-CoA = 1,2-dihexadecanoyl-sn-glycero-3-phosphocholine + CoA</text>
        <dbReference type="Rhea" id="RHEA:35983"/>
        <dbReference type="ChEBI" id="CHEBI:57287"/>
        <dbReference type="ChEBI" id="CHEBI:57379"/>
        <dbReference type="ChEBI" id="CHEBI:72998"/>
        <dbReference type="ChEBI" id="CHEBI:72999"/>
    </reaction>
    <physiologicalReaction direction="left-to-right" evidence="21">
        <dbReference type="Rhea" id="RHEA:35984"/>
    </physiologicalReaction>
</comment>
<comment type="catalytic activity">
    <reaction evidence="12">
        <text>1,2-dihexadecanoyl-sn-glycero-3-phosphocholine + H2O = 1-hexadecanoyl-sn-glycero-3-phosphocholine + hexadecanoate + H(+)</text>
        <dbReference type="Rhea" id="RHEA:41223"/>
        <dbReference type="ChEBI" id="CHEBI:7896"/>
        <dbReference type="ChEBI" id="CHEBI:15377"/>
        <dbReference type="ChEBI" id="CHEBI:15378"/>
        <dbReference type="ChEBI" id="CHEBI:72998"/>
        <dbReference type="ChEBI" id="CHEBI:72999"/>
    </reaction>
    <physiologicalReaction direction="left-to-right" evidence="21">
        <dbReference type="Rhea" id="RHEA:41224"/>
    </physiologicalReaction>
</comment>
<comment type="activity regulation">
    <text evidence="12">MJ33 or lithium;[(2R)-1-hexadecoxy-3-(2,2,2-trifluoroethoxy)propan-2-yl] methyl phosphate inhibits its phospholipase A2 activity (PubMed:26830860). CI-976 or 2,2-Dimethyl-N-(2,4,6-trimethoxyphenyl)dodecanamide inhibits its lysophosphatidylcholine acyltransferase activity (PubMed:26830860).</text>
</comment>
<comment type="biophysicochemical properties">
    <kinetics>
        <KM evidence="12">18 uM for palmitoyl-CoA (lysophosphatidylcholine acyltransferase activity at pH 4.0)</KM>
        <KM evidence="12">15 uM for palmitoyl-CoA (lysophosphatidylcholine acyltransferase activity for the phosphorylated form at pH 7.0)</KM>
        <Vmax evidence="12">30.0 nmol/min/mg enzyme with palmitoyl-CoA as substrate for lysophosphatidylcholine acyltransferase activity (at pH 4.0)</Vmax>
        <Vmax evidence="12">770.0 nmol/min/mg enzyme with palmitoyl-CoA as substrate for lysophosphatidylcholine acyltransferase activity (phosphorylated form at pH 7.0)</Vmax>
    </kinetics>
    <phDependence>
        <text evidence="12">Shows a 3-fold greater lysophosphatidylcholine acyltransferase activity at pH 4.0 than at pH 7.0.</text>
    </phDependence>
</comment>
<comment type="subunit">
    <text evidence="1 3 9 10 11 13 16">Homodimer (PubMed:27353378, PubMed:9587003). Interacts with GSTP1; mediates PRDX6 glutathionylation and regeneration (By similarity). Interacts with APEX1 (PubMed:19188445). Interacts with STH (PubMed:16186110). May interact with FAM168B (PubMed:20716133). May interact with HTR2A (By similarity).</text>
</comment>
<comment type="interaction">
    <interactant intactId="EBI-2255129">
        <id>P30041</id>
    </interactant>
    <interactant intactId="EBI-2875816">
        <id>Q9NP61</id>
        <label>ARFGAP3</label>
    </interactant>
    <organismsDiffer>false</organismsDiffer>
    <experiments>3</experiments>
</comment>
<comment type="interaction">
    <interactant intactId="EBI-2255129">
        <id>P30041</id>
    </interactant>
    <interactant intactId="EBI-3248549">
        <id>Q7KZN9</id>
        <label>COX15</label>
    </interactant>
    <organismsDiffer>false</organismsDiffer>
    <experiments>3</experiments>
</comment>
<comment type="interaction">
    <interactant intactId="EBI-2255129">
        <id>P30041</id>
    </interactant>
    <interactant intactId="EBI-353366">
        <id>P09622</id>
        <label>DLD</label>
    </interactant>
    <organismsDiffer>false</organismsDiffer>
    <experiments>3</experiments>
</comment>
<comment type="interaction">
    <interactant intactId="EBI-2255129">
        <id>P30041</id>
    </interactant>
    <interactant intactId="EBI-358311">
        <id>P12004</id>
        <label>PCNA</label>
    </interactant>
    <organismsDiffer>false</organismsDiffer>
    <experiments>2</experiments>
</comment>
<comment type="interaction">
    <interactant intactId="EBI-2255129">
        <id>P30041</id>
    </interactant>
    <interactant intactId="EBI-359304">
        <id>P48556</id>
        <label>PSMD8</label>
    </interactant>
    <organismsDiffer>false</organismsDiffer>
    <experiments>3</experiments>
</comment>
<comment type="interaction">
    <interactant intactId="EBI-2255129">
        <id>P30041</id>
    </interactant>
    <interactant intactId="EBI-710997">
        <id>P54274</id>
        <label>TERF1</label>
    </interactant>
    <organismsDiffer>false</organismsDiffer>
    <experiments>2</experiments>
</comment>
<comment type="interaction">
    <interactant intactId="EBI-2255129">
        <id>P30041</id>
    </interactant>
    <interactant intactId="EBI-354158">
        <id>P21796</id>
        <label>VDAC1</label>
    </interactant>
    <organismsDiffer>false</organismsDiffer>
    <experiments>3</experiments>
</comment>
<comment type="interaction">
    <interactant intactId="EBI-2255129">
        <id>P30041</id>
    </interactant>
    <interactant intactId="EBI-8826747">
        <id>PRO_0000308465</id>
        <dbReference type="UniProtKB" id="P29991"/>
    </interactant>
    <organismsDiffer>true</organismsDiffer>
    <experiments>3</experiments>
</comment>
<comment type="subcellular location">
    <subcellularLocation>
        <location evidence="9 10 15">Cytoplasm</location>
    </subcellularLocation>
    <subcellularLocation>
        <location evidence="2">Lysosome</location>
    </subcellularLocation>
    <text evidence="2">Also found in lung secretory organelles (lamellar bodies).</text>
</comment>
<comment type="PTM">
    <text evidence="6 13">Irreversibly inactivated by overoxidation of Cys-47 to sulfinic acid (Cys-SO(2)H) and sulfonic acid (Cys-SO(3)H) forms upon oxidative stress.</text>
</comment>
<comment type="PTM">
    <text evidence="2 12">Phosphorylation at Thr-177 by MAP kinases increases the phospholipase activity of the enzyme (By similarity). The phosphorylated form exhibits a greater lysophosphatidylcholine acyltransferase activity compared to the non-phosphorylated form (PubMed:26830860).</text>
</comment>
<comment type="miscellaneous">
    <text evidence="2">The active site is a conserved redox-active cysteine residue, the peroxidatic cysteine (C(P)), which makes the nucleophilic attack on the peroxide substrate. The peroxide oxidizes the C(P)-SH to cysteine sulfenic acid (C(P)-SOH), which then reacts with another cysteine residue, the resolving cysteine (C(R)), to form a disulfide bridge. The disulfide is subsequently reduced by an appropriate electron donor to complete the catalytic cycle. In this 1-Cys peroxiredoxin, no C(R) is present and C(P) instead forms a disulfide with a cysteine from another protein or with a small thiol molecule. C(P) is reactivated by glutathionylation mediated by glutathione S-transferase Pi, followed by spontaneous reduction of the enzyme with glutathione.</text>
</comment>
<comment type="similarity">
    <text evidence="19">Belongs to the peroxiredoxin family. Prx6 subfamily.</text>
</comment>
<gene>
    <name type="primary">PRDX6</name>
    <name type="synonym">AOP2</name>
    <name type="synonym">KIAA0106</name>
</gene>
<accession>P30041</accession>
<accession>A8JZY7</accession>
<accession>P32077</accession>
<accession>Q5TAH4</accession>
<accession>Q5ZEZ8</accession>
<reference key="1">
    <citation type="journal article" date="1997" name="J. Biol. Chem.">
        <title>Identification of a human cDNA clone for lysosomal type Ca2+-independent phospholipase A2 and properties of the expressed protein.</title>
        <authorList>
            <person name="Kim T.-S."/>
            <person name="Sundaresh C.S."/>
            <person name="Feinstein S.I."/>
            <person name="Dodia C."/>
            <person name="Skach W.R."/>
            <person name="Jain M.K."/>
            <person name="Nagase T."/>
            <person name="Seki N."/>
            <person name="Ishikawa K."/>
            <person name="Nomura N."/>
            <person name="Fisher A.B."/>
        </authorList>
    </citation>
    <scope>NUCLEOTIDE SEQUENCE [MRNA]</scope>
</reference>
<reference key="2">
    <citation type="journal article" date="1997" name="J. Biol. Chem.">
        <authorList>
            <person name="Kim T.-S."/>
            <person name="Sundaresh C.S."/>
            <person name="Feinstein S.I."/>
            <person name="Dodia C."/>
            <person name="Skach W.R."/>
            <person name="Jain M.K."/>
            <person name="Nagase T."/>
            <person name="Seki N."/>
            <person name="Ishikawa K."/>
            <person name="Nomura N."/>
            <person name="Fisher A.B."/>
        </authorList>
    </citation>
    <scope>ERRATUM OF PUBMED:8999971</scope>
</reference>
<reference key="3">
    <citation type="journal article" date="1997" name="Oncogene">
        <title>The human homologue of a bovine non-selenium glutathione peroxidase is a novel keratinocyte growth factor-regulated gene.</title>
        <authorList>
            <person name="Frank S."/>
            <person name="Munz B."/>
            <person name="Werner S."/>
        </authorList>
    </citation>
    <scope>NUCLEOTIDE SEQUENCE [MRNA]</scope>
</reference>
<reference key="4">
    <citation type="journal article" date="1995" name="DNA Res.">
        <title>Prediction of the coding sequences of unidentified human genes. III. The coding sequences of 40 new genes (KIAA0081-KIAA0120) deduced by analysis of cDNA clones from human cell line KG-1.</title>
        <authorList>
            <person name="Nagase T."/>
            <person name="Miyajima N."/>
            <person name="Tanaka A."/>
            <person name="Sazuka T."/>
            <person name="Seki N."/>
            <person name="Sato S."/>
            <person name="Tabata S."/>
            <person name="Ishikawa K."/>
            <person name="Kawarabayasi Y."/>
            <person name="Kotani H."/>
            <person name="Nomura N."/>
        </authorList>
    </citation>
    <scope>NUCLEOTIDE SEQUENCE [LARGE SCALE MRNA]</scope>
    <source>
        <tissue>Bone marrow</tissue>
    </source>
</reference>
<reference key="5">
    <citation type="journal article" date="2004" name="Nat. Genet.">
        <title>Complete sequencing and characterization of 21,243 full-length human cDNAs.</title>
        <authorList>
            <person name="Ota T."/>
            <person name="Suzuki Y."/>
            <person name="Nishikawa T."/>
            <person name="Otsuki T."/>
            <person name="Sugiyama T."/>
            <person name="Irie R."/>
            <person name="Wakamatsu A."/>
            <person name="Hayashi K."/>
            <person name="Sato H."/>
            <person name="Nagai K."/>
            <person name="Kimura K."/>
            <person name="Makita H."/>
            <person name="Sekine M."/>
            <person name="Obayashi M."/>
            <person name="Nishi T."/>
            <person name="Shibahara T."/>
            <person name="Tanaka T."/>
            <person name="Ishii S."/>
            <person name="Yamamoto J."/>
            <person name="Saito K."/>
            <person name="Kawai Y."/>
            <person name="Isono Y."/>
            <person name="Nakamura Y."/>
            <person name="Nagahari K."/>
            <person name="Murakami K."/>
            <person name="Yasuda T."/>
            <person name="Iwayanagi T."/>
            <person name="Wagatsuma M."/>
            <person name="Shiratori A."/>
            <person name="Sudo H."/>
            <person name="Hosoiri T."/>
            <person name="Kaku Y."/>
            <person name="Kodaira H."/>
            <person name="Kondo H."/>
            <person name="Sugawara M."/>
            <person name="Takahashi M."/>
            <person name="Kanda K."/>
            <person name="Yokoi T."/>
            <person name="Furuya T."/>
            <person name="Kikkawa E."/>
            <person name="Omura Y."/>
            <person name="Abe K."/>
            <person name="Kamihara K."/>
            <person name="Katsuta N."/>
            <person name="Sato K."/>
            <person name="Tanikawa M."/>
            <person name="Yamazaki M."/>
            <person name="Ninomiya K."/>
            <person name="Ishibashi T."/>
            <person name="Yamashita H."/>
            <person name="Murakawa K."/>
            <person name="Fujimori K."/>
            <person name="Tanai H."/>
            <person name="Kimata M."/>
            <person name="Watanabe M."/>
            <person name="Hiraoka S."/>
            <person name="Chiba Y."/>
            <person name="Ishida S."/>
            <person name="Ono Y."/>
            <person name="Takiguchi S."/>
            <person name="Watanabe S."/>
            <person name="Yosida M."/>
            <person name="Hotuta T."/>
            <person name="Kusano J."/>
            <person name="Kanehori K."/>
            <person name="Takahashi-Fujii A."/>
            <person name="Hara H."/>
            <person name="Tanase T.-O."/>
            <person name="Nomura Y."/>
            <person name="Togiya S."/>
            <person name="Komai F."/>
            <person name="Hara R."/>
            <person name="Takeuchi K."/>
            <person name="Arita M."/>
            <person name="Imose N."/>
            <person name="Musashino K."/>
            <person name="Yuuki H."/>
            <person name="Oshima A."/>
            <person name="Sasaki N."/>
            <person name="Aotsuka S."/>
            <person name="Yoshikawa Y."/>
            <person name="Matsunawa H."/>
            <person name="Ichihara T."/>
            <person name="Shiohata N."/>
            <person name="Sano S."/>
            <person name="Moriya S."/>
            <person name="Momiyama H."/>
            <person name="Satoh N."/>
            <person name="Takami S."/>
            <person name="Terashima Y."/>
            <person name="Suzuki O."/>
            <person name="Nakagawa S."/>
            <person name="Senoh A."/>
            <person name="Mizoguchi H."/>
            <person name="Goto Y."/>
            <person name="Shimizu F."/>
            <person name="Wakebe H."/>
            <person name="Hishigaki H."/>
            <person name="Watanabe T."/>
            <person name="Sugiyama A."/>
            <person name="Takemoto M."/>
            <person name="Kawakami B."/>
            <person name="Yamazaki M."/>
            <person name="Watanabe K."/>
            <person name="Kumagai A."/>
            <person name="Itakura S."/>
            <person name="Fukuzumi Y."/>
            <person name="Fujimori Y."/>
            <person name="Komiyama M."/>
            <person name="Tashiro H."/>
            <person name="Tanigami A."/>
            <person name="Fujiwara T."/>
            <person name="Ono T."/>
            <person name="Yamada K."/>
            <person name="Fujii Y."/>
            <person name="Ozaki K."/>
            <person name="Hirao M."/>
            <person name="Ohmori Y."/>
            <person name="Kawabata A."/>
            <person name="Hikiji T."/>
            <person name="Kobatake N."/>
            <person name="Inagaki H."/>
            <person name="Ikema Y."/>
            <person name="Okamoto S."/>
            <person name="Okitani R."/>
            <person name="Kawakami T."/>
            <person name="Noguchi S."/>
            <person name="Itoh T."/>
            <person name="Shigeta K."/>
            <person name="Senba T."/>
            <person name="Matsumura K."/>
            <person name="Nakajima Y."/>
            <person name="Mizuno T."/>
            <person name="Morinaga M."/>
            <person name="Sasaki M."/>
            <person name="Togashi T."/>
            <person name="Oyama M."/>
            <person name="Hata H."/>
            <person name="Watanabe M."/>
            <person name="Komatsu T."/>
            <person name="Mizushima-Sugano J."/>
            <person name="Satoh T."/>
            <person name="Shirai Y."/>
            <person name="Takahashi Y."/>
            <person name="Nakagawa K."/>
            <person name="Okumura K."/>
            <person name="Nagase T."/>
            <person name="Nomura N."/>
            <person name="Kikuchi H."/>
            <person name="Masuho Y."/>
            <person name="Yamashita R."/>
            <person name="Nakai K."/>
            <person name="Yada T."/>
            <person name="Nakamura Y."/>
            <person name="Ohara O."/>
            <person name="Isogai T."/>
            <person name="Sugano S."/>
        </authorList>
    </citation>
    <scope>NUCLEOTIDE SEQUENCE [LARGE SCALE MRNA]</scope>
</reference>
<reference key="6">
    <citation type="submission" date="2005-10" db="EMBL/GenBank/DDBJ databases">
        <authorList>
            <consortium name="NIEHS SNPs program"/>
        </authorList>
    </citation>
    <scope>NUCLEOTIDE SEQUENCE [GENOMIC DNA]</scope>
</reference>
<reference key="7">
    <citation type="journal article" date="2006" name="Nature">
        <title>The DNA sequence and biological annotation of human chromosome 1.</title>
        <authorList>
            <person name="Gregory S.G."/>
            <person name="Barlow K.F."/>
            <person name="McLay K.E."/>
            <person name="Kaul R."/>
            <person name="Swarbreck D."/>
            <person name="Dunham A."/>
            <person name="Scott C.E."/>
            <person name="Howe K.L."/>
            <person name="Woodfine K."/>
            <person name="Spencer C.C.A."/>
            <person name="Jones M.C."/>
            <person name="Gillson C."/>
            <person name="Searle S."/>
            <person name="Zhou Y."/>
            <person name="Kokocinski F."/>
            <person name="McDonald L."/>
            <person name="Evans R."/>
            <person name="Phillips K."/>
            <person name="Atkinson A."/>
            <person name="Cooper R."/>
            <person name="Jones C."/>
            <person name="Hall R.E."/>
            <person name="Andrews T.D."/>
            <person name="Lloyd C."/>
            <person name="Ainscough R."/>
            <person name="Almeida J.P."/>
            <person name="Ambrose K.D."/>
            <person name="Anderson F."/>
            <person name="Andrew R.W."/>
            <person name="Ashwell R.I.S."/>
            <person name="Aubin K."/>
            <person name="Babbage A.K."/>
            <person name="Bagguley C.L."/>
            <person name="Bailey J."/>
            <person name="Beasley H."/>
            <person name="Bethel G."/>
            <person name="Bird C.P."/>
            <person name="Bray-Allen S."/>
            <person name="Brown J.Y."/>
            <person name="Brown A.J."/>
            <person name="Buckley D."/>
            <person name="Burton J."/>
            <person name="Bye J."/>
            <person name="Carder C."/>
            <person name="Chapman J.C."/>
            <person name="Clark S.Y."/>
            <person name="Clarke G."/>
            <person name="Clee C."/>
            <person name="Cobley V."/>
            <person name="Collier R.E."/>
            <person name="Corby N."/>
            <person name="Coville G.J."/>
            <person name="Davies J."/>
            <person name="Deadman R."/>
            <person name="Dunn M."/>
            <person name="Earthrowl M."/>
            <person name="Ellington A.G."/>
            <person name="Errington H."/>
            <person name="Frankish A."/>
            <person name="Frankland J."/>
            <person name="French L."/>
            <person name="Garner P."/>
            <person name="Garnett J."/>
            <person name="Gay L."/>
            <person name="Ghori M.R.J."/>
            <person name="Gibson R."/>
            <person name="Gilby L.M."/>
            <person name="Gillett W."/>
            <person name="Glithero R.J."/>
            <person name="Grafham D.V."/>
            <person name="Griffiths C."/>
            <person name="Griffiths-Jones S."/>
            <person name="Grocock R."/>
            <person name="Hammond S."/>
            <person name="Harrison E.S.I."/>
            <person name="Hart E."/>
            <person name="Haugen E."/>
            <person name="Heath P.D."/>
            <person name="Holmes S."/>
            <person name="Holt K."/>
            <person name="Howden P.J."/>
            <person name="Hunt A.R."/>
            <person name="Hunt S.E."/>
            <person name="Hunter G."/>
            <person name="Isherwood J."/>
            <person name="James R."/>
            <person name="Johnson C."/>
            <person name="Johnson D."/>
            <person name="Joy A."/>
            <person name="Kay M."/>
            <person name="Kershaw J.K."/>
            <person name="Kibukawa M."/>
            <person name="Kimberley A.M."/>
            <person name="King A."/>
            <person name="Knights A.J."/>
            <person name="Lad H."/>
            <person name="Laird G."/>
            <person name="Lawlor S."/>
            <person name="Leongamornlert D.A."/>
            <person name="Lloyd D.M."/>
            <person name="Loveland J."/>
            <person name="Lovell J."/>
            <person name="Lush M.J."/>
            <person name="Lyne R."/>
            <person name="Martin S."/>
            <person name="Mashreghi-Mohammadi M."/>
            <person name="Matthews L."/>
            <person name="Matthews N.S.W."/>
            <person name="McLaren S."/>
            <person name="Milne S."/>
            <person name="Mistry S."/>
            <person name="Moore M.J.F."/>
            <person name="Nickerson T."/>
            <person name="O'Dell C.N."/>
            <person name="Oliver K."/>
            <person name="Palmeiri A."/>
            <person name="Palmer S.A."/>
            <person name="Parker A."/>
            <person name="Patel D."/>
            <person name="Pearce A.V."/>
            <person name="Peck A.I."/>
            <person name="Pelan S."/>
            <person name="Phelps K."/>
            <person name="Phillimore B.J."/>
            <person name="Plumb R."/>
            <person name="Rajan J."/>
            <person name="Raymond C."/>
            <person name="Rouse G."/>
            <person name="Saenphimmachak C."/>
            <person name="Sehra H.K."/>
            <person name="Sheridan E."/>
            <person name="Shownkeen R."/>
            <person name="Sims S."/>
            <person name="Skuce C.D."/>
            <person name="Smith M."/>
            <person name="Steward C."/>
            <person name="Subramanian S."/>
            <person name="Sycamore N."/>
            <person name="Tracey A."/>
            <person name="Tromans A."/>
            <person name="Van Helmond Z."/>
            <person name="Wall M."/>
            <person name="Wallis J.M."/>
            <person name="White S."/>
            <person name="Whitehead S.L."/>
            <person name="Wilkinson J.E."/>
            <person name="Willey D.L."/>
            <person name="Williams H."/>
            <person name="Wilming L."/>
            <person name="Wray P.W."/>
            <person name="Wu Z."/>
            <person name="Coulson A."/>
            <person name="Vaudin M."/>
            <person name="Sulston J.E."/>
            <person name="Durbin R.M."/>
            <person name="Hubbard T."/>
            <person name="Wooster R."/>
            <person name="Dunham I."/>
            <person name="Carter N.P."/>
            <person name="McVean G."/>
            <person name="Ross M.T."/>
            <person name="Harrow J."/>
            <person name="Olson M.V."/>
            <person name="Beck S."/>
            <person name="Rogers J."/>
            <person name="Bentley D.R."/>
        </authorList>
    </citation>
    <scope>NUCLEOTIDE SEQUENCE [LARGE SCALE GENOMIC DNA]</scope>
</reference>
<reference key="8">
    <citation type="submission" date="2005-07" db="EMBL/GenBank/DDBJ databases">
        <authorList>
            <person name="Mural R.J."/>
            <person name="Istrail S."/>
            <person name="Sutton G.G."/>
            <person name="Florea L."/>
            <person name="Halpern A.L."/>
            <person name="Mobarry C.M."/>
            <person name="Lippert R."/>
            <person name="Walenz B."/>
            <person name="Shatkay H."/>
            <person name="Dew I."/>
            <person name="Miller J.R."/>
            <person name="Flanigan M.J."/>
            <person name="Edwards N.J."/>
            <person name="Bolanos R."/>
            <person name="Fasulo D."/>
            <person name="Halldorsson B.V."/>
            <person name="Hannenhalli S."/>
            <person name="Turner R."/>
            <person name="Yooseph S."/>
            <person name="Lu F."/>
            <person name="Nusskern D.R."/>
            <person name="Shue B.C."/>
            <person name="Zheng X.H."/>
            <person name="Zhong F."/>
            <person name="Delcher A.L."/>
            <person name="Huson D.H."/>
            <person name="Kravitz S.A."/>
            <person name="Mouchard L."/>
            <person name="Reinert K."/>
            <person name="Remington K.A."/>
            <person name="Clark A.G."/>
            <person name="Waterman M.S."/>
            <person name="Eichler E.E."/>
            <person name="Adams M.D."/>
            <person name="Hunkapiller M.W."/>
            <person name="Myers E.W."/>
            <person name="Venter J.C."/>
        </authorList>
    </citation>
    <scope>NUCLEOTIDE SEQUENCE [LARGE SCALE GENOMIC DNA]</scope>
</reference>
<reference key="9">
    <citation type="journal article" date="2004" name="Genome Res.">
        <title>The status, quality, and expansion of the NIH full-length cDNA project: the Mammalian Gene Collection (MGC).</title>
        <authorList>
            <consortium name="The MGC Project Team"/>
        </authorList>
    </citation>
    <scope>NUCLEOTIDE SEQUENCE [LARGE SCALE MRNA]</scope>
    <source>
        <tissue>Fetal brain</tissue>
        <tissue>Testis</tissue>
    </source>
</reference>
<reference key="10">
    <citation type="journal article" date="2003" name="Nat. Biotechnol.">
        <title>Exploring proteomes and analyzing protein processing by mass spectrometric identification of sorted N-terminal peptides.</title>
        <authorList>
            <person name="Gevaert K."/>
            <person name="Goethals M."/>
            <person name="Martens L."/>
            <person name="Van Damme J."/>
            <person name="Staes A."/>
            <person name="Thomas G.R."/>
            <person name="Vandekerckhove J."/>
        </authorList>
    </citation>
    <scope>PROTEIN SEQUENCE OF 2-22</scope>
    <source>
        <tissue>Platelet</tissue>
    </source>
</reference>
<reference key="11">
    <citation type="submission" date="2008-12" db="UniProtKB">
        <authorList>
            <person name="Lubec G."/>
            <person name="Vishwanath V."/>
            <person name="Chen W.-Q."/>
            <person name="Sun Y."/>
        </authorList>
    </citation>
    <scope>PROTEIN SEQUENCE OF 2-22; 25-53; 85-106; 133-142; 145-155; 163-173 AND 175-199</scope>
    <scope>IDENTIFICATION BY MASS SPECTROMETRY</scope>
    <source>
        <tissue>Brain</tissue>
        <tissue>Cajal-Retzius cell</tissue>
        <tissue>Fetal brain cortex</tissue>
    </source>
</reference>
<reference key="12">
    <citation type="journal article" date="1992" name="Electrophoresis">
        <title>Human liver protein map: a reference database established by microsequencing and gel comparison.</title>
        <authorList>
            <person name="Hochstrasser D.F."/>
            <person name="Frutiger S."/>
            <person name="Paquet N."/>
            <person name="Bairoch A."/>
            <person name="Ravier F."/>
            <person name="Pasquali C."/>
            <person name="Sanchez J.-C."/>
            <person name="Tissot J.-D."/>
            <person name="Bjellqvist B."/>
            <person name="Vargas R."/>
            <person name="Appel R.D."/>
            <person name="Hughes G.J."/>
        </authorList>
    </citation>
    <scope>PROTEIN SEQUENCE OF 2-15</scope>
    <source>
        <tissue>Liver</tissue>
    </source>
</reference>
<reference key="13">
    <citation type="journal article" date="1993" name="Electrophoresis">
        <title>Plasma and red blood cell protein maps: update 1993.</title>
        <authorList>
            <person name="Golaz O."/>
            <person name="Hughes G.J."/>
            <person name="Frutiger S."/>
            <person name="Paquet N."/>
            <person name="Bairoch A."/>
            <person name="Pasquali C."/>
            <person name="Sanchez J.-C."/>
            <person name="Tissot J.-D."/>
            <person name="Appel R.D."/>
            <person name="Walzer C."/>
            <person name="Balant L."/>
            <person name="Hochstrasser D.F."/>
        </authorList>
    </citation>
    <scope>PROTEIN SEQUENCE OF 2-13</scope>
    <source>
        <tissue>Erythrocyte</tissue>
    </source>
</reference>
<reference key="14">
    <citation type="submission" date="2004-09" db="EMBL/GenBank/DDBJ databases">
        <title>DNA probes built and sequenced for microarrays hybridisations.</title>
        <authorList>
            <person name="Dominguez O."/>
            <person name="Lombardia L."/>
        </authorList>
    </citation>
    <scope>NUCLEOTIDE SEQUENCE [MRNA] OF 14-99</scope>
</reference>
<reference key="15">
    <citation type="journal article" date="1998" name="J. Biol. Chem.">
        <title>Characterization of a mammalian peroxiredoxin that contains one conserved cysteine.</title>
        <authorList>
            <person name="Kang S.W."/>
            <person name="Baines I.C."/>
            <person name="Rhee S.G."/>
        </authorList>
    </citation>
    <scope>FUNCTION</scope>
    <scope>CATALYTIC ACTIVITY</scope>
    <scope>SUBCELLULAR LOCATION</scope>
    <scope>MUTAGENESIS OF CYS-47</scope>
</reference>
<reference key="16">
    <citation type="journal article" date="2000" name="J. Biol. Chem.">
        <title>1-Cys peroxiredoxin, a bifunctional enzyme with glutathione peroxidase and phospholipase A2 activities.</title>
        <authorList>
            <person name="Chen J.-W."/>
            <person name="Dodia C."/>
            <person name="Feinstein S.I."/>
            <person name="Jain M.K."/>
            <person name="Fisher A.B."/>
        </authorList>
    </citation>
    <scope>FUNCTION</scope>
    <scope>CATALYTIC ACTIVITY</scope>
    <scope>MUTAGENESIS OF SER-32 AND CYS-47</scope>
</reference>
<reference key="17">
    <citation type="journal article" date="2002" name="Biochem. J.">
        <title>A method for detection of overoxidation of cysteines: peroxiredoxins are oxidized in vivo at the active-site cysteine during oxidative stress.</title>
        <authorList>
            <person name="Wagner E."/>
            <person name="Luche S."/>
            <person name="Penna L."/>
            <person name="Chevallet M."/>
            <person name="van Dorsselaer A."/>
            <person name="Leize-Wagner E."/>
            <person name="Rabilloud T."/>
        </authorList>
    </citation>
    <scope>OVEROXIDATION AT CYS-47</scope>
</reference>
<reference key="18">
    <citation type="journal article" date="2005" name="J. Biol. Chem.">
        <title>Saitohin, which is nested in the tau locus and confers allele-specific susceptibility to several neurodegenerative diseases, interacts with peroxiredoxin 6.</title>
        <authorList>
            <person name="Gao L."/>
            <person name="Tse S.-W."/>
            <person name="Conrad C."/>
            <person name="Andreadis A."/>
        </authorList>
    </citation>
    <scope>SUBCELLULAR LOCATION</scope>
    <scope>INTERACTION WITH STH</scope>
</reference>
<reference key="19">
    <citation type="journal article" date="2005" name="Nat. Biotechnol.">
        <title>Immunoaffinity profiling of tyrosine phosphorylation in cancer cells.</title>
        <authorList>
            <person name="Rush J."/>
            <person name="Moritz A."/>
            <person name="Lee K.A."/>
            <person name="Guo A."/>
            <person name="Goss V.L."/>
            <person name="Spek E.J."/>
            <person name="Zhang H."/>
            <person name="Zha X.-M."/>
            <person name="Polakiewicz R.D."/>
            <person name="Comb M.J."/>
        </authorList>
    </citation>
    <scope>PHOSPHORYLATION [LARGE SCALE ANALYSIS] AT TYR-89</scope>
    <scope>IDENTIFICATION BY MASS SPECTROMETRY [LARGE SCALE ANALYSIS]</scope>
</reference>
<reference key="20">
    <citation type="journal article" date="2008" name="Proc. Natl. Acad. Sci. U.S.A.">
        <title>A quantitative atlas of mitotic phosphorylation.</title>
        <authorList>
            <person name="Dephoure N."/>
            <person name="Zhou C."/>
            <person name="Villen J."/>
            <person name="Beausoleil S.A."/>
            <person name="Bakalarski C.E."/>
            <person name="Elledge S.J."/>
            <person name="Gygi S.P."/>
        </authorList>
    </citation>
    <scope>PHOSPHORYLATION [LARGE SCALE ANALYSIS] AT THR-44</scope>
    <scope>IDENTIFICATION BY MASS SPECTROMETRY [LARGE SCALE ANALYSIS]</scope>
    <source>
        <tissue>Cervix carcinoma</tissue>
    </source>
</reference>
<reference key="21">
    <citation type="journal article" date="2009" name="Mol. Cell. Biol.">
        <title>APE1/Ref-1 interacts with NPM1 within nucleoli and plays a role in the rRNA quality control process.</title>
        <authorList>
            <person name="Vascotto C."/>
            <person name="Fantini D."/>
            <person name="Romanello M."/>
            <person name="Cesaratto L."/>
            <person name="Deganuto M."/>
            <person name="Leonardi A."/>
            <person name="Radicella J.P."/>
            <person name="Kelley M.R."/>
            <person name="D'Ambrosio C."/>
            <person name="Scaloni A."/>
            <person name="Quadrifoglio F."/>
            <person name="Tell G."/>
        </authorList>
    </citation>
    <scope>INTERACTION WITH APEX1</scope>
    <scope>IDENTIFICATION BY MASS SPECTROMETRY</scope>
    <scope>SUBCELLULAR LOCATION</scope>
</reference>
<reference key="22">
    <citation type="journal article" date="2009" name="Science">
        <title>Lysine acetylation targets protein complexes and co-regulates major cellular functions.</title>
        <authorList>
            <person name="Choudhary C."/>
            <person name="Kumar C."/>
            <person name="Gnad F."/>
            <person name="Nielsen M.L."/>
            <person name="Rehman M."/>
            <person name="Walther T.C."/>
            <person name="Olsen J.V."/>
            <person name="Mann M."/>
        </authorList>
    </citation>
    <scope>ACETYLATION [LARGE SCALE ANALYSIS] AT LYS-63 AND LYS-209</scope>
    <scope>IDENTIFICATION BY MASS SPECTROMETRY [LARGE SCALE ANALYSIS]</scope>
</reference>
<reference key="23">
    <citation type="journal article" date="2010" name="Sci. Signal.">
        <title>Quantitative phosphoproteomics reveals widespread full phosphorylation site occupancy during mitosis.</title>
        <authorList>
            <person name="Olsen J.V."/>
            <person name="Vermeulen M."/>
            <person name="Santamaria A."/>
            <person name="Kumar C."/>
            <person name="Miller M.L."/>
            <person name="Jensen L.J."/>
            <person name="Gnad F."/>
            <person name="Cox J."/>
            <person name="Jensen T.S."/>
            <person name="Nigg E.A."/>
            <person name="Brunak S."/>
            <person name="Mann M."/>
        </authorList>
    </citation>
    <scope>PHOSPHORYLATION [LARGE SCALE ANALYSIS] AT THR-44</scope>
    <scope>IDENTIFICATION BY MASS SPECTROMETRY [LARGE SCALE ANALYSIS]</scope>
    <source>
        <tissue>Cervix carcinoma</tissue>
    </source>
</reference>
<reference key="24">
    <citation type="journal article" date="2011" name="BMC Syst. Biol.">
        <title>Initial characterization of the human central proteome.</title>
        <authorList>
            <person name="Burkard T.R."/>
            <person name="Planyavsky M."/>
            <person name="Kaupe I."/>
            <person name="Breitwieser F.P."/>
            <person name="Buerckstuemmer T."/>
            <person name="Bennett K.L."/>
            <person name="Superti-Furga G."/>
            <person name="Colinge J."/>
        </authorList>
    </citation>
    <scope>IDENTIFICATION BY MASS SPECTROMETRY [LARGE SCALE ANALYSIS]</scope>
</reference>
<reference key="25">
    <citation type="journal article" date="2011" name="J. Cell. Mol. Med.">
        <title>The novel protein MANI modulates neurogenesis and neurite-cone growth.</title>
        <authorList>
            <person name="Mishra M."/>
            <person name="Akatsu H."/>
            <person name="Heese K."/>
        </authorList>
    </citation>
    <scope>INTERACTION WITH FAM168B</scope>
</reference>
<reference key="26">
    <citation type="journal article" date="2012" name="J. Proteome Res.">
        <title>Resveratrol-induced changes of the human adipocyte secretion profile.</title>
        <authorList>
            <person name="Rosenow A."/>
            <person name="Noben J.P."/>
            <person name="Jocken J."/>
            <person name="Kallendrusch S."/>
            <person name="Fischer-Posovszky P."/>
            <person name="Mariman E.C."/>
            <person name="Renes J."/>
        </authorList>
    </citation>
    <scope>IDENTIFICATION BY MASS SPECTROMETRY [LARGE SCALE ANALYSIS]</scope>
</reference>
<reference key="27">
    <citation type="journal article" date="2012" name="Mol. Cell. Proteomics">
        <title>Comparative large-scale characterisation of plant vs. mammal proteins reveals similar and idiosyncratic N-alpha acetylation features.</title>
        <authorList>
            <person name="Bienvenut W.V."/>
            <person name="Sumpton D."/>
            <person name="Martinez A."/>
            <person name="Lilla S."/>
            <person name="Espagne C."/>
            <person name="Meinnel T."/>
            <person name="Giglione C."/>
        </authorList>
    </citation>
    <scope>CLEAVAGE OF INITIATOR METHIONINE [LARGE SCALE ANALYSIS]</scope>
    <scope>IDENTIFICATION BY MASS SPECTROMETRY [LARGE SCALE ANALYSIS]</scope>
</reference>
<reference key="28">
    <citation type="journal article" date="2012" name="Proc. Natl. Acad. Sci. U.S.A.">
        <title>N-terminal acetylome analyses and functional insights of the N-terminal acetyltransferase NatB.</title>
        <authorList>
            <person name="Van Damme P."/>
            <person name="Lasa M."/>
            <person name="Polevoda B."/>
            <person name="Gazquez C."/>
            <person name="Elosegui-Artola A."/>
            <person name="Kim D.S."/>
            <person name="De Juan-Pardo E."/>
            <person name="Demeyer K."/>
            <person name="Hole K."/>
            <person name="Larrea E."/>
            <person name="Timmerman E."/>
            <person name="Prieto J."/>
            <person name="Arnesen T."/>
            <person name="Sherman F."/>
            <person name="Gevaert K."/>
            <person name="Aldabe R."/>
        </authorList>
    </citation>
    <scope>IDENTIFICATION BY MASS SPECTROMETRY [LARGE SCALE ANALYSIS]</scope>
</reference>
<reference key="29">
    <citation type="journal article" date="2013" name="J. Proteome Res.">
        <title>Toward a comprehensive characterization of a human cancer cell phosphoproteome.</title>
        <authorList>
            <person name="Zhou H."/>
            <person name="Di Palma S."/>
            <person name="Preisinger C."/>
            <person name="Peng M."/>
            <person name="Polat A.N."/>
            <person name="Heck A.J."/>
            <person name="Mohammed S."/>
        </authorList>
    </citation>
    <scope>PHOSPHORYLATION [LARGE SCALE ANALYSIS] AT THR-44</scope>
    <scope>IDENTIFICATION BY MASS SPECTROMETRY [LARGE SCALE ANALYSIS]</scope>
    <source>
        <tissue>Cervix carcinoma</tissue>
        <tissue>Erythroleukemia</tissue>
    </source>
</reference>
<reference key="30">
    <citation type="journal article" date="2014" name="J. Proteomics">
        <title>An enzyme assisted RP-RPLC approach for in-depth analysis of human liver phosphoproteome.</title>
        <authorList>
            <person name="Bian Y."/>
            <person name="Song C."/>
            <person name="Cheng K."/>
            <person name="Dong M."/>
            <person name="Wang F."/>
            <person name="Huang J."/>
            <person name="Sun D."/>
            <person name="Wang L."/>
            <person name="Ye M."/>
            <person name="Zou H."/>
        </authorList>
    </citation>
    <scope>IDENTIFICATION BY MASS SPECTROMETRY [LARGE SCALE ANALYSIS]</scope>
    <source>
        <tissue>Liver</tissue>
    </source>
</reference>
<reference key="31">
    <citation type="journal article" date="2015" name="Proteomics">
        <title>N-terminome analysis of the human mitochondrial proteome.</title>
        <authorList>
            <person name="Vaca Jacome A.S."/>
            <person name="Rabilloud T."/>
            <person name="Schaeffer-Reiss C."/>
            <person name="Rompais M."/>
            <person name="Ayoub D."/>
            <person name="Lane L."/>
            <person name="Bairoch A."/>
            <person name="Van Dorsselaer A."/>
            <person name="Carapito C."/>
        </authorList>
    </citation>
    <scope>CLEAVAGE OF INITIATOR METHIONINE [LARGE SCALE ANALYSIS]</scope>
    <scope>IDENTIFICATION BY MASS SPECTROMETRY [LARGE SCALE ANALYSIS]</scope>
</reference>
<reference key="32">
    <citation type="journal article" date="2016" name="J. Lipid Res.">
        <title>A novel lysophosphatidylcholine acyl transferase activity is expressed by peroxiredoxin 6.</title>
        <authorList>
            <person name="Fisher A.B."/>
            <person name="Dodia C."/>
            <person name="Sorokina E.M."/>
            <person name="Li H."/>
            <person name="Zhou S."/>
            <person name="Raabe T."/>
            <person name="Feinstein S.I."/>
        </authorList>
    </citation>
    <scope>FUNCTION</scope>
    <scope>CATALYTIC ACTIVITY</scope>
    <scope>BIOPHYSICOCHEMICAL PROPERTIES</scope>
    <scope>ACTIVITY REGULATION</scope>
    <scope>PHOSPHORYLATION</scope>
</reference>
<reference key="33">
    <citation type="journal article" date="1998" name="Nat. Struct. Biol.">
        <title>Crystal structure of a novel human peroxidase enzyme at 2.0-A resolution.</title>
        <authorList>
            <person name="Choi H.-J."/>
            <person name="Kang S.W."/>
            <person name="Yang C.-H."/>
            <person name="Rhee S.G."/>
            <person name="Ryu S.-E."/>
        </authorList>
    </citation>
    <scope>X-RAY CRYSTALLOGRAPHY (2.0 ANGSTROMS)</scope>
    <scope>ACTIVE SITE</scope>
    <scope>SUBUNIT</scope>
</reference>
<reference key="34">
    <citation type="journal article" date="2016" name="Biochem. Biophys. Res. Commun.">
        <title>Crystal structures of human peroxiredoxin 6 in different oxidation states.</title>
        <authorList>
            <person name="Kim K.H."/>
            <person name="Lee W."/>
            <person name="Kim E.E."/>
        </authorList>
    </citation>
    <scope>X-RAY CRYSTALLOGRAPHY (2.50 ANGSTROMS) OF 1-224</scope>
    <scope>SUBUNIT</scope>
</reference>
<evidence type="ECO:0000250" key="1">
    <source>
        <dbReference type="UniProtKB" id="O08709"/>
    </source>
</evidence>
<evidence type="ECO:0000250" key="2">
    <source>
        <dbReference type="UniProtKB" id="O35244"/>
    </source>
</evidence>
<evidence type="ECO:0000250" key="3">
    <source>
        <dbReference type="UniProtKB" id="O77834"/>
    </source>
</evidence>
<evidence type="ECO:0000255" key="4">
    <source>
        <dbReference type="PROSITE-ProRule" id="PRU00691"/>
    </source>
</evidence>
<evidence type="ECO:0000269" key="5">
    <source>
    </source>
</evidence>
<evidence type="ECO:0000269" key="6">
    <source>
    </source>
</evidence>
<evidence type="ECO:0000269" key="7">
    <source>
    </source>
</evidence>
<evidence type="ECO:0000269" key="8">
    <source>
    </source>
</evidence>
<evidence type="ECO:0000269" key="9">
    <source>
    </source>
</evidence>
<evidence type="ECO:0000269" key="10">
    <source>
    </source>
</evidence>
<evidence type="ECO:0000269" key="11">
    <source>
    </source>
</evidence>
<evidence type="ECO:0000269" key="12">
    <source>
    </source>
</evidence>
<evidence type="ECO:0000269" key="13">
    <source>
    </source>
</evidence>
<evidence type="ECO:0000269" key="14">
    <source>
    </source>
</evidence>
<evidence type="ECO:0000269" key="15">
    <source>
    </source>
</evidence>
<evidence type="ECO:0000269" key="16">
    <source>
    </source>
</evidence>
<evidence type="ECO:0000269" key="17">
    <source ref="11"/>
</evidence>
<evidence type="ECO:0000303" key="18">
    <source>
    </source>
</evidence>
<evidence type="ECO:0000305" key="19"/>
<evidence type="ECO:0000305" key="20">
    <source>
    </source>
</evidence>
<evidence type="ECO:0000305" key="21">
    <source>
    </source>
</evidence>
<evidence type="ECO:0007744" key="22">
    <source>
    </source>
</evidence>
<evidence type="ECO:0007744" key="23">
    <source>
    </source>
</evidence>
<evidence type="ECO:0007744" key="24">
    <source>
    </source>
</evidence>
<evidence type="ECO:0007744" key="25">
    <source>
    </source>
</evidence>
<evidence type="ECO:0007744" key="26">
    <source>
    </source>
</evidence>
<evidence type="ECO:0007744" key="27">
    <source>
    </source>
</evidence>
<evidence type="ECO:0007744" key="28">
    <source>
    </source>
</evidence>
<evidence type="ECO:0007829" key="29">
    <source>
        <dbReference type="PDB" id="1PRX"/>
    </source>
</evidence>
<evidence type="ECO:0007829" key="30">
    <source>
        <dbReference type="PDB" id="5B6M"/>
    </source>
</evidence>
<evidence type="ECO:0007829" key="31">
    <source>
        <dbReference type="PDB" id="5B6N"/>
    </source>
</evidence>
<feature type="initiator methionine" description="Removed" evidence="7 8 14 17 26 28">
    <location>
        <position position="1"/>
    </location>
</feature>
<feature type="chain" id="PRO_0000135102" description="Peroxiredoxin-6">
    <location>
        <begin position="2"/>
        <end position="224"/>
    </location>
</feature>
<feature type="domain" description="Thioredoxin" evidence="4">
    <location>
        <begin position="5"/>
        <end position="169"/>
    </location>
</feature>
<feature type="region of interest" description="Required and sufficient for targeting to lysosomes and lamellar bodies" evidence="2">
    <location>
        <begin position="31"/>
        <end position="40"/>
    </location>
</feature>
<feature type="active site" description="Cysteine sulfenic acid (-SOH) intermediate; for peroxidase activity" evidence="5 15 16">
    <location>
        <position position="47"/>
    </location>
</feature>
<feature type="active site" description="For phospholipase activity" evidence="2">
    <location>
        <position position="140"/>
    </location>
</feature>
<feature type="site" description="Important for phospholipase activity" evidence="20">
    <location>
        <position position="32"/>
    </location>
</feature>
<feature type="modified residue" description="Phosphothreonine" evidence="23 25 27">
    <location>
        <position position="44"/>
    </location>
</feature>
<feature type="modified residue" description="N6-acetyllysine" evidence="24">
    <location>
        <position position="63"/>
    </location>
</feature>
<feature type="modified residue" description="Phosphotyrosine" evidence="22">
    <location>
        <position position="89"/>
    </location>
</feature>
<feature type="modified residue" description="Phosphothreonine; by MAPK" evidence="2">
    <location>
        <position position="177"/>
    </location>
</feature>
<feature type="modified residue" description="N6-acetyllysine; alternate" evidence="24">
    <location>
        <position position="209"/>
    </location>
</feature>
<feature type="modified residue" description="N6-succinyllysine; alternate" evidence="1">
    <location>
        <position position="209"/>
    </location>
</feature>
<feature type="mutagenesis site" description="Loss of phospholipase activity, but no effect on peroxidase activity." evidence="15">
    <original>S</original>
    <variation>A</variation>
    <location>
        <position position="32"/>
    </location>
</feature>
<feature type="mutagenesis site" description="Loss of peroxidase activity, but no effect on phospholipase activity." evidence="15">
    <original>C</original>
    <variation>S</variation>
    <location>
        <position position="47"/>
    </location>
</feature>
<feature type="strand" evidence="29">
    <location>
        <begin position="15"/>
        <end position="18"/>
    </location>
</feature>
<feature type="strand" evidence="29">
    <location>
        <begin position="21"/>
        <end position="24"/>
    </location>
</feature>
<feature type="helix" evidence="29">
    <location>
        <begin position="25"/>
        <end position="29"/>
    </location>
</feature>
<feature type="strand" evidence="29">
    <location>
        <begin position="32"/>
        <end position="40"/>
    </location>
</feature>
<feature type="helix" evidence="29">
    <location>
        <begin position="45"/>
        <end position="62"/>
    </location>
</feature>
<feature type="turn" evidence="29">
    <location>
        <begin position="63"/>
        <end position="65"/>
    </location>
</feature>
<feature type="strand" evidence="29">
    <location>
        <begin position="66"/>
        <end position="74"/>
    </location>
</feature>
<feature type="helix" evidence="29">
    <location>
        <begin position="76"/>
        <end position="89"/>
    </location>
</feature>
<feature type="strand" evidence="29">
    <location>
        <begin position="102"/>
        <end position="104"/>
    </location>
</feature>
<feature type="helix" evidence="29">
    <location>
        <begin position="109"/>
        <end position="113"/>
    </location>
</feature>
<feature type="strand" evidence="30">
    <location>
        <begin position="117"/>
        <end position="122"/>
    </location>
</feature>
<feature type="strand" evidence="29">
    <location>
        <begin position="124"/>
        <end position="126"/>
    </location>
</feature>
<feature type="strand" evidence="30">
    <location>
        <begin position="128"/>
        <end position="130"/>
    </location>
</feature>
<feature type="strand" evidence="29">
    <location>
        <begin position="133"/>
        <end position="137"/>
    </location>
</feature>
<feature type="strand" evidence="29">
    <location>
        <begin position="141"/>
        <end position="148"/>
    </location>
</feature>
<feature type="strand" evidence="31">
    <location>
        <begin position="151"/>
        <end position="153"/>
    </location>
</feature>
<feature type="helix" evidence="29">
    <location>
        <begin position="157"/>
        <end position="173"/>
    </location>
</feature>
<feature type="strand" evidence="29">
    <location>
        <begin position="175"/>
        <end position="177"/>
    </location>
</feature>
<feature type="strand" evidence="29">
    <location>
        <begin position="187"/>
        <end position="189"/>
    </location>
</feature>
<feature type="helix" evidence="29">
    <location>
        <begin position="195"/>
        <end position="201"/>
    </location>
</feature>
<feature type="strand" evidence="29">
    <location>
        <begin position="219"/>
        <end position="221"/>
    </location>
</feature>
<sequence>MPGGLLLGDVAPNFEANTTVGRIRFHDFLGDSWGILFSHPRDFTPVCTTELGRAAKLAPEFAKRNVKLIALSIDSVEDHLAWSKDINAYNCEEPTEKLPFPIIDDRNRELAILLGMLDPAEKDEKGMPVTARVVFVFGPDKKLKLSILYPATTGRNFDEILRVVISLQLTAEKRVATPVDWKDGDSVMVLPTIPEEEAKKLFPKGVFTKELPSGKKYLRYTPQP</sequence>
<protein>
    <recommendedName>
        <fullName>Peroxiredoxin-6</fullName>
        <ecNumber evidence="5 15">1.11.1.27</ecNumber>
    </recommendedName>
    <alternativeName>
        <fullName>1-Cys peroxiredoxin</fullName>
        <shortName>1-Cys PRX</shortName>
    </alternativeName>
    <alternativeName>
        <fullName>24 kDa protein</fullName>
    </alternativeName>
    <alternativeName>
        <fullName>Acidic calcium-independent phospholipase A2</fullName>
        <shortName>aiPLA2</shortName>
        <ecNumber evidence="5 12">3.1.1.4</ecNumber>
    </alternativeName>
    <alternativeName>
        <fullName>Antioxidant protein 2</fullName>
    </alternativeName>
    <alternativeName>
        <fullName evidence="19">Glutathione-dependent peroxiredoxin</fullName>
    </alternativeName>
    <alternativeName>
        <fullName>Liver 2D page spot 40</fullName>
    </alternativeName>
    <alternativeName>
        <fullName evidence="18">Lysophosphatidylcholine acyltransferase 5</fullName>
        <shortName>LPC acyltransferase 5</shortName>
        <shortName>LPCAT-5</shortName>
        <shortName>Lyso-PC acyltransferase 5</shortName>
        <ecNumber evidence="12">2.3.1.23</ecNumber>
    </alternativeName>
    <alternativeName>
        <fullName>Non-selenium glutathione peroxidase</fullName>
        <shortName>NSGPx</shortName>
    </alternativeName>
    <alternativeName>
        <fullName>Red blood cells page spot 12</fullName>
    </alternativeName>
</protein>
<proteinExistence type="evidence at protein level"/>
<organism>
    <name type="scientific">Homo sapiens</name>
    <name type="common">Human</name>
    <dbReference type="NCBI Taxonomy" id="9606"/>
    <lineage>
        <taxon>Eukaryota</taxon>
        <taxon>Metazoa</taxon>
        <taxon>Chordata</taxon>
        <taxon>Craniata</taxon>
        <taxon>Vertebrata</taxon>
        <taxon>Euteleostomi</taxon>
        <taxon>Mammalia</taxon>
        <taxon>Eutheria</taxon>
        <taxon>Euarchontoglires</taxon>
        <taxon>Primates</taxon>
        <taxon>Haplorrhini</taxon>
        <taxon>Catarrhini</taxon>
        <taxon>Hominidae</taxon>
        <taxon>Homo</taxon>
    </lineage>
</organism>
<keyword id="KW-0002">3D-structure</keyword>
<keyword id="KW-0007">Acetylation</keyword>
<keyword id="KW-0049">Antioxidant</keyword>
<keyword id="KW-0963">Cytoplasm</keyword>
<keyword id="KW-0903">Direct protein sequencing</keyword>
<keyword id="KW-0378">Hydrolase</keyword>
<keyword id="KW-0442">Lipid degradation</keyword>
<keyword id="KW-0443">Lipid metabolism</keyword>
<keyword id="KW-0458">Lysosome</keyword>
<keyword id="KW-0511">Multifunctional enzyme</keyword>
<keyword id="KW-0560">Oxidoreductase</keyword>
<keyword id="KW-0575">Peroxidase</keyword>
<keyword id="KW-0597">Phosphoprotein</keyword>
<keyword id="KW-1267">Proteomics identification</keyword>
<keyword id="KW-0676">Redox-active center</keyword>
<keyword id="KW-1185">Reference proteome</keyword>
<keyword id="KW-0808">Transferase</keyword>
<dbReference type="EC" id="1.11.1.27" evidence="5 15"/>
<dbReference type="EC" id="3.1.1.4" evidence="5 12"/>
<dbReference type="EC" id="2.3.1.23" evidence="12"/>
<dbReference type="EMBL" id="D14662">
    <property type="protein sequence ID" value="BAA03496.1"/>
    <property type="molecule type" value="mRNA"/>
</dbReference>
<dbReference type="EMBL" id="DQ230990">
    <property type="protein sequence ID" value="ABB02185.1"/>
    <property type="molecule type" value="Genomic_DNA"/>
</dbReference>
<dbReference type="EMBL" id="AL139142">
    <property type="status" value="NOT_ANNOTATED_CDS"/>
    <property type="molecule type" value="Genomic_DNA"/>
</dbReference>
<dbReference type="EMBL" id="AK289352">
    <property type="protein sequence ID" value="BAF82041.1"/>
    <property type="molecule type" value="mRNA"/>
</dbReference>
<dbReference type="EMBL" id="CH471067">
    <property type="protein sequence ID" value="EAW90944.1"/>
    <property type="molecule type" value="Genomic_DNA"/>
</dbReference>
<dbReference type="EMBL" id="BC035857">
    <property type="protein sequence ID" value="AAH35857.1"/>
    <property type="molecule type" value="mRNA"/>
</dbReference>
<dbReference type="EMBL" id="BC053550">
    <property type="protein sequence ID" value="AAH53550.1"/>
    <property type="molecule type" value="mRNA"/>
</dbReference>
<dbReference type="EMBL" id="AJ844621">
    <property type="protein sequence ID" value="CAH59743.1"/>
    <property type="molecule type" value="mRNA"/>
</dbReference>
<dbReference type="CCDS" id="CCDS1307.1"/>
<dbReference type="RefSeq" id="NP_004896.1">
    <property type="nucleotide sequence ID" value="NM_004905.3"/>
</dbReference>
<dbReference type="PDB" id="1PRX">
    <property type="method" value="X-ray"/>
    <property type="resolution" value="2.00 A"/>
    <property type="chains" value="A/B=1-224"/>
</dbReference>
<dbReference type="PDB" id="5B6M">
    <property type="method" value="X-ray"/>
    <property type="resolution" value="2.50 A"/>
    <property type="chains" value="A/B/C/D/E/F=1-224"/>
</dbReference>
<dbReference type="PDB" id="5B6N">
    <property type="method" value="X-ray"/>
    <property type="resolution" value="2.90 A"/>
    <property type="chains" value="A/B/C/D/E/F=1-224"/>
</dbReference>
<dbReference type="PDBsum" id="1PRX"/>
<dbReference type="PDBsum" id="5B6M"/>
<dbReference type="PDBsum" id="5B6N"/>
<dbReference type="BMRB" id="P30041"/>
<dbReference type="SMR" id="P30041"/>
<dbReference type="BioGRID" id="114956">
    <property type="interactions" value="271"/>
</dbReference>
<dbReference type="FunCoup" id="P30041">
    <property type="interactions" value="1120"/>
</dbReference>
<dbReference type="IntAct" id="P30041">
    <property type="interactions" value="72"/>
</dbReference>
<dbReference type="MINT" id="P30041"/>
<dbReference type="STRING" id="9606.ENSP00000342026"/>
<dbReference type="ChEMBL" id="CHEMBL4295741"/>
<dbReference type="DrugBank" id="DB03814">
    <property type="generic name" value="2-(N-morpholino)ethanesulfonic acid"/>
</dbReference>
<dbReference type="DrugBank" id="DB09130">
    <property type="generic name" value="Copper"/>
</dbReference>
<dbReference type="SwissLipids" id="SLP:000001691"/>
<dbReference type="MoonDB" id="P30041">
    <property type="type" value="Curated"/>
</dbReference>
<dbReference type="MoonProt" id="P30041"/>
<dbReference type="PeroxiBase" id="4426">
    <property type="entry name" value="Hs1CysPrx01"/>
</dbReference>
<dbReference type="TCDB" id="8.A.147.1.3">
    <property type="family name" value="the peroxiredoxin heme-binding protein, tpx1 (tpx1) family"/>
</dbReference>
<dbReference type="CarbonylDB" id="P30041"/>
<dbReference type="GlyGen" id="P30041">
    <property type="glycosylation" value="1 site, 1 O-linked glycan (1 site)"/>
</dbReference>
<dbReference type="iPTMnet" id="P30041"/>
<dbReference type="MetOSite" id="P30041"/>
<dbReference type="PhosphoSitePlus" id="P30041"/>
<dbReference type="SwissPalm" id="P30041"/>
<dbReference type="BioMuta" id="PRDX6"/>
<dbReference type="DMDM" id="1718024"/>
<dbReference type="OGP" id="P30041"/>
<dbReference type="REPRODUCTION-2DPAGE" id="IPI00220301"/>
<dbReference type="REPRODUCTION-2DPAGE" id="P30041"/>
<dbReference type="CPTAC" id="CPTAC-117"/>
<dbReference type="CPTAC" id="CPTAC-118"/>
<dbReference type="jPOST" id="P30041"/>
<dbReference type="MassIVE" id="P30041"/>
<dbReference type="PaxDb" id="9606-ENSP00000342026"/>
<dbReference type="PeptideAtlas" id="P30041"/>
<dbReference type="PRIDE" id="P30041"/>
<dbReference type="ProteomicsDB" id="54620"/>
<dbReference type="Pumba" id="P30041"/>
<dbReference type="TopDownProteomics" id="P30041"/>
<dbReference type="Antibodypedia" id="1681">
    <property type="antibodies" value="629 antibodies from 44 providers"/>
</dbReference>
<dbReference type="DNASU" id="9588"/>
<dbReference type="Ensembl" id="ENST00000340385.6">
    <property type="protein sequence ID" value="ENSP00000342026.5"/>
    <property type="gene ID" value="ENSG00000117592.9"/>
</dbReference>
<dbReference type="GeneID" id="9588"/>
<dbReference type="KEGG" id="hsa:9588"/>
<dbReference type="MANE-Select" id="ENST00000340385.6">
    <property type="protein sequence ID" value="ENSP00000342026.5"/>
    <property type="RefSeq nucleotide sequence ID" value="NM_004905.3"/>
    <property type="RefSeq protein sequence ID" value="NP_004896.1"/>
</dbReference>
<dbReference type="AGR" id="HGNC:16753"/>
<dbReference type="CTD" id="9588"/>
<dbReference type="DisGeNET" id="9588"/>
<dbReference type="GeneCards" id="PRDX6"/>
<dbReference type="HGNC" id="HGNC:16753">
    <property type="gene designation" value="PRDX6"/>
</dbReference>
<dbReference type="HPA" id="ENSG00000117592">
    <property type="expression patterns" value="Low tissue specificity"/>
</dbReference>
<dbReference type="MIM" id="602316">
    <property type="type" value="gene"/>
</dbReference>
<dbReference type="neXtProt" id="NX_P30041"/>
<dbReference type="OpenTargets" id="ENSG00000117592"/>
<dbReference type="PharmGKB" id="PA134992760"/>
<dbReference type="VEuPathDB" id="HostDB:ENSG00000117592"/>
<dbReference type="eggNOG" id="KOG0854">
    <property type="taxonomic scope" value="Eukaryota"/>
</dbReference>
<dbReference type="GeneTree" id="ENSGT00550000074794"/>
<dbReference type="HOGENOM" id="CLU_042529_4_1_1"/>
<dbReference type="InParanoid" id="P30041"/>
<dbReference type="OMA" id="HGPMNIP"/>
<dbReference type="OrthoDB" id="2996783at2759"/>
<dbReference type="PAN-GO" id="P30041">
    <property type="GO annotations" value="3 GO annotations based on evolutionary models"/>
</dbReference>
<dbReference type="PhylomeDB" id="P30041"/>
<dbReference type="TreeFam" id="TF105183"/>
<dbReference type="BioCyc" id="MetaCyc:HS04152-MONOMER"/>
<dbReference type="BRENDA" id="1.11.1.27">
    <property type="organism ID" value="2681"/>
</dbReference>
<dbReference type="BRENDA" id="2.3.1.23">
    <property type="organism ID" value="2681"/>
</dbReference>
<dbReference type="BRENDA" id="3.1.1.4">
    <property type="organism ID" value="2681"/>
</dbReference>
<dbReference type="PathwayCommons" id="P30041"/>
<dbReference type="Reactome" id="R-HSA-3299685">
    <property type="pathway name" value="Detoxification of Reactive Oxygen Species"/>
</dbReference>
<dbReference type="Reactome" id="R-HSA-6798695">
    <property type="pathway name" value="Neutrophil degranulation"/>
</dbReference>
<dbReference type="SignaLink" id="P30041"/>
<dbReference type="SIGNOR" id="P30041"/>
<dbReference type="BioGRID-ORCS" id="9588">
    <property type="hits" value="21 hits in 1157 CRISPR screens"/>
</dbReference>
<dbReference type="CD-CODE" id="DEE660B4">
    <property type="entry name" value="Stress granule"/>
</dbReference>
<dbReference type="CD-CODE" id="FB4E32DD">
    <property type="entry name" value="Presynaptic clusters and postsynaptic densities"/>
</dbReference>
<dbReference type="ChiTaRS" id="PRDX6">
    <property type="organism name" value="human"/>
</dbReference>
<dbReference type="EvolutionaryTrace" id="P30041"/>
<dbReference type="GeneWiki" id="PRDX6"/>
<dbReference type="GenomeRNAi" id="9588"/>
<dbReference type="Pharos" id="P30041">
    <property type="development level" value="Tbio"/>
</dbReference>
<dbReference type="PRO" id="PR:P30041"/>
<dbReference type="Proteomes" id="UP000005640">
    <property type="component" value="Chromosome 1"/>
</dbReference>
<dbReference type="RNAct" id="P30041">
    <property type="molecule type" value="protein"/>
</dbReference>
<dbReference type="Bgee" id="ENSG00000117592">
    <property type="expression patterns" value="Expressed in corpus epididymis and 214 other cell types or tissues"/>
</dbReference>
<dbReference type="ExpressionAtlas" id="P30041">
    <property type="expression patterns" value="baseline and differential"/>
</dbReference>
<dbReference type="GO" id="GO:0035578">
    <property type="term" value="C:azurophil granule lumen"/>
    <property type="evidence" value="ECO:0000304"/>
    <property type="project" value="Reactome"/>
</dbReference>
<dbReference type="GO" id="GO:0005737">
    <property type="term" value="C:cytoplasm"/>
    <property type="evidence" value="ECO:0000314"/>
    <property type="project" value="UniProtKB"/>
</dbReference>
<dbReference type="GO" id="GO:0005829">
    <property type="term" value="C:cytosol"/>
    <property type="evidence" value="ECO:0000318"/>
    <property type="project" value="GO_Central"/>
</dbReference>
<dbReference type="GO" id="GO:0070062">
    <property type="term" value="C:extracellular exosome"/>
    <property type="evidence" value="ECO:0007005"/>
    <property type="project" value="UniProtKB"/>
</dbReference>
<dbReference type="GO" id="GO:0005576">
    <property type="term" value="C:extracellular region"/>
    <property type="evidence" value="ECO:0000304"/>
    <property type="project" value="Reactome"/>
</dbReference>
<dbReference type="GO" id="GO:0005615">
    <property type="term" value="C:extracellular space"/>
    <property type="evidence" value="ECO:0007005"/>
    <property type="project" value="UniProtKB"/>
</dbReference>
<dbReference type="GO" id="GO:0016020">
    <property type="term" value="C:membrane"/>
    <property type="evidence" value="ECO:0007005"/>
    <property type="project" value="UniProtKB"/>
</dbReference>
<dbReference type="GO" id="GO:0005634">
    <property type="term" value="C:nucleus"/>
    <property type="evidence" value="ECO:0000314"/>
    <property type="project" value="UniProtKB"/>
</dbReference>
<dbReference type="GO" id="GO:0048471">
    <property type="term" value="C:perinuclear region of cytoplasm"/>
    <property type="evidence" value="ECO:0000314"/>
    <property type="project" value="UniProtKB"/>
</dbReference>
<dbReference type="GO" id="GO:0047184">
    <property type="term" value="F:1-acylglycerophosphocholine O-acyltransferase activity"/>
    <property type="evidence" value="ECO:0000314"/>
    <property type="project" value="UniProtKB"/>
</dbReference>
<dbReference type="GO" id="GO:0045296">
    <property type="term" value="F:cadherin binding"/>
    <property type="evidence" value="ECO:0007005"/>
    <property type="project" value="BHF-UCL"/>
</dbReference>
<dbReference type="GO" id="GO:0047499">
    <property type="term" value="F:calcium-independent phospholipase A2 activity"/>
    <property type="evidence" value="ECO:0000315"/>
    <property type="project" value="CAFA"/>
</dbReference>
<dbReference type="GO" id="GO:0004602">
    <property type="term" value="F:glutathione peroxidase activity"/>
    <property type="evidence" value="ECO:0000315"/>
    <property type="project" value="CAFA"/>
</dbReference>
<dbReference type="GO" id="GO:0042802">
    <property type="term" value="F:identical protein binding"/>
    <property type="evidence" value="ECO:0000315"/>
    <property type="project" value="CAFA"/>
</dbReference>
<dbReference type="GO" id="GO:0004601">
    <property type="term" value="F:peroxidase activity"/>
    <property type="evidence" value="ECO:0000318"/>
    <property type="project" value="GO_Central"/>
</dbReference>
<dbReference type="GO" id="GO:0051920">
    <property type="term" value="F:peroxiredoxin activity"/>
    <property type="evidence" value="ECO:0007669"/>
    <property type="project" value="InterPro"/>
</dbReference>
<dbReference type="GO" id="GO:0004623">
    <property type="term" value="F:phospholipase A2 activity"/>
    <property type="evidence" value="ECO:0000314"/>
    <property type="project" value="UniProtKB"/>
</dbReference>
<dbReference type="GO" id="GO:0031625">
    <property type="term" value="F:ubiquitin protein ligase binding"/>
    <property type="evidence" value="ECO:0000353"/>
    <property type="project" value="ParkinsonsUK-UCL"/>
</dbReference>
<dbReference type="GO" id="GO:0045454">
    <property type="term" value="P:cell redox homeostasis"/>
    <property type="evidence" value="ECO:0000318"/>
    <property type="project" value="GO_Central"/>
</dbReference>
<dbReference type="GO" id="GO:0098869">
    <property type="term" value="P:cellular oxidant detoxification"/>
    <property type="evidence" value="ECO:0000315"/>
    <property type="project" value="CAFA"/>
</dbReference>
<dbReference type="GO" id="GO:0046475">
    <property type="term" value="P:glycerophospholipid catabolic process"/>
    <property type="evidence" value="ECO:0000315"/>
    <property type="project" value="CAFA"/>
</dbReference>
<dbReference type="GO" id="GO:0042744">
    <property type="term" value="P:hydrogen peroxide catabolic process"/>
    <property type="evidence" value="ECO:0007669"/>
    <property type="project" value="Ensembl"/>
</dbReference>
<dbReference type="GO" id="GO:0048026">
    <property type="term" value="P:positive regulation of mRNA splicing, via spliceosome"/>
    <property type="evidence" value="ECO:0000316"/>
    <property type="project" value="UniProtKB"/>
</dbReference>
<dbReference type="GO" id="GO:0006979">
    <property type="term" value="P:response to oxidative stress"/>
    <property type="evidence" value="ECO:0000315"/>
    <property type="project" value="CAFA"/>
</dbReference>
<dbReference type="CDD" id="cd03016">
    <property type="entry name" value="PRX_1cys"/>
    <property type="match status" value="1"/>
</dbReference>
<dbReference type="FunFam" id="3.30.1020.10:FF:000001">
    <property type="entry name" value="1-Cys peroxiredoxin"/>
    <property type="match status" value="1"/>
</dbReference>
<dbReference type="FunFam" id="3.40.30.10:FF:000011">
    <property type="entry name" value="Peroxiredoxin PRX1"/>
    <property type="match status" value="1"/>
</dbReference>
<dbReference type="Gene3D" id="3.30.1020.10">
    <property type="entry name" value="Antioxidant, Horf6, Chain A, domain2"/>
    <property type="match status" value="1"/>
</dbReference>
<dbReference type="Gene3D" id="3.40.30.10">
    <property type="entry name" value="Glutaredoxin"/>
    <property type="match status" value="1"/>
</dbReference>
<dbReference type="InterPro" id="IPR000866">
    <property type="entry name" value="AhpC/TSA"/>
</dbReference>
<dbReference type="InterPro" id="IPR024706">
    <property type="entry name" value="Peroxiredoxin_AhpC-typ"/>
</dbReference>
<dbReference type="InterPro" id="IPR019479">
    <property type="entry name" value="Peroxiredoxin_C"/>
</dbReference>
<dbReference type="InterPro" id="IPR045020">
    <property type="entry name" value="PRX_1cys"/>
</dbReference>
<dbReference type="InterPro" id="IPR036249">
    <property type="entry name" value="Thioredoxin-like_sf"/>
</dbReference>
<dbReference type="InterPro" id="IPR013766">
    <property type="entry name" value="Thioredoxin_domain"/>
</dbReference>
<dbReference type="PANTHER" id="PTHR43503">
    <property type="entry name" value="MCG48959-RELATED"/>
    <property type="match status" value="1"/>
</dbReference>
<dbReference type="PANTHER" id="PTHR43503:SF11">
    <property type="entry name" value="PEROXIREDOXIN-6"/>
    <property type="match status" value="1"/>
</dbReference>
<dbReference type="Pfam" id="PF10417">
    <property type="entry name" value="1-cysPrx_C"/>
    <property type="match status" value="1"/>
</dbReference>
<dbReference type="Pfam" id="PF00578">
    <property type="entry name" value="AhpC-TSA"/>
    <property type="match status" value="1"/>
</dbReference>
<dbReference type="PIRSF" id="PIRSF000239">
    <property type="entry name" value="AHPC"/>
    <property type="match status" value="1"/>
</dbReference>
<dbReference type="SUPFAM" id="SSF52833">
    <property type="entry name" value="Thioredoxin-like"/>
    <property type="match status" value="1"/>
</dbReference>
<dbReference type="PROSITE" id="PS51352">
    <property type="entry name" value="THIOREDOXIN_2"/>
    <property type="match status" value="1"/>
</dbReference>
<name>PRDX6_HUMAN</name>